<accession>Q8BYI8</accession>
<accession>Q3TE07</accession>
<accession>Q5DTX5</accession>
<accession>Q8BYJ4</accession>
<accession>Q9CXB0</accession>
<gene>
    <name evidence="6" type="primary">Fam234b</name>
    <name type="synonym">Kiaa1467</name>
</gene>
<sequence>MATVLSRALKLPGKKSPDLGEYDPLTQADSDESEDDLVLNLQQKNGGVKNGKSALGDLPEPDSDADVAGAAKPHLSEVTPEGFPSEPLGGLEQKATSPLVSYVRTSVFLLTLVISMVLVLLCAFLIPCPPRDLHSAWSRRLGSQGGGDLSPLELADVNRDGLRDVLLTFVTTRNGTEGGVGSQPTADLVCLSGMNGSTLWSSPLPEEAQDVTCLDLIPGSVAKTICLVTGTRKMLSAFNATSGKVLWTLNPNHLSNGTLAAPVVVLPDLDEDGVRDLVVLAIGELQPDLCFLLVSGRTGSPVGRPVKYNIVGVGNLIGPQVYITASGAVYILFGFGNIQAVALRDIFVQAQNRDSSPPSLQIEEPEWEKHRSVNLSELIDVYSDGVELLQLVKAPDSNSSSLLITTRQGLVLLRGQDLTPHWKLNLQGLRSQPTPGYFTDDQTLDFLLQTQDGDGMKKMTVVDGGSGSIVWSYSIPCHMKETPTTSAITSDQKSVFLFWAEALTAASLSSDDSSGAEPPGLYHLYLLHPAFPSILLDLSNTTGIVTASEVGINDIWKDAFYVTRTTGMSPEGHPTSLVVSKLSLRWALMEGQMVQLKETTPKIGRGELRRFLSRIKFVDSPYQI</sequence>
<protein>
    <recommendedName>
        <fullName>Protein FAM234B</fullName>
    </recommendedName>
</protein>
<feature type="chain" id="PRO_0000288914" description="Protein FAM234B">
    <location>
        <begin position="1"/>
        <end position="624"/>
    </location>
</feature>
<feature type="transmembrane region" description="Helical" evidence="3">
    <location>
        <begin position="107"/>
        <end position="127"/>
    </location>
</feature>
<feature type="region of interest" description="Disordered" evidence="4">
    <location>
        <begin position="1"/>
        <end position="91"/>
    </location>
</feature>
<feature type="modified residue" description="Phosphoserine" evidence="1">
    <location>
        <position position="16"/>
    </location>
</feature>
<feature type="modified residue" description="Phosphothreonine" evidence="1">
    <location>
        <position position="26"/>
    </location>
</feature>
<feature type="modified residue" description="Phosphoserine" evidence="7">
    <location>
        <position position="30"/>
    </location>
</feature>
<feature type="modified residue" description="Phosphoserine" evidence="7">
    <location>
        <position position="33"/>
    </location>
</feature>
<feature type="modified residue" description="Phosphoserine" evidence="7">
    <location>
        <position position="63"/>
    </location>
</feature>
<feature type="splice variant" id="VSP_025825" description="In isoform 2." evidence="5">
    <original>I</original>
    <variation>AGEMAQCVLAKPGYLNLIPWPHMLEGGNGVLHTVL</variation>
    <location>
        <position position="624"/>
    </location>
</feature>
<feature type="sequence conflict" description="In Ref. 2; BAD90448." evidence="5" ref="2">
    <original>N</original>
    <variation>D</variation>
    <location>
        <position position="250"/>
    </location>
</feature>
<feature type="sequence conflict" description="In Ref. 2; BAD90448." evidence="5" ref="2">
    <original>T</original>
    <variation>M</variation>
    <location>
        <position position="419"/>
    </location>
</feature>
<feature type="sequence conflict" description="In Ref. 1; BAB31206." evidence="5" ref="1">
    <original>I</original>
    <variation>V</variation>
    <location>
        <position position="544"/>
    </location>
</feature>
<organism>
    <name type="scientific">Mus musculus</name>
    <name type="common">Mouse</name>
    <dbReference type="NCBI Taxonomy" id="10090"/>
    <lineage>
        <taxon>Eukaryota</taxon>
        <taxon>Metazoa</taxon>
        <taxon>Chordata</taxon>
        <taxon>Craniata</taxon>
        <taxon>Vertebrata</taxon>
        <taxon>Euteleostomi</taxon>
        <taxon>Mammalia</taxon>
        <taxon>Eutheria</taxon>
        <taxon>Euarchontoglires</taxon>
        <taxon>Glires</taxon>
        <taxon>Rodentia</taxon>
        <taxon>Myomorpha</taxon>
        <taxon>Muroidea</taxon>
        <taxon>Muridae</taxon>
        <taxon>Murinae</taxon>
        <taxon>Mus</taxon>
        <taxon>Mus</taxon>
    </lineage>
</organism>
<name>F234B_MOUSE</name>
<evidence type="ECO:0000250" key="1">
    <source>
        <dbReference type="UniProtKB" id="A2RU67"/>
    </source>
</evidence>
<evidence type="ECO:0000250" key="2">
    <source>
        <dbReference type="UniProtKB" id="D3ZWJ9"/>
    </source>
</evidence>
<evidence type="ECO:0000255" key="3"/>
<evidence type="ECO:0000256" key="4">
    <source>
        <dbReference type="SAM" id="MobiDB-lite"/>
    </source>
</evidence>
<evidence type="ECO:0000305" key="5"/>
<evidence type="ECO:0000312" key="6">
    <source>
        <dbReference type="MGI" id="MGI:1921775"/>
    </source>
</evidence>
<evidence type="ECO:0007744" key="7">
    <source>
    </source>
</evidence>
<comment type="subcellular location">
    <subcellularLocation>
        <location evidence="3">Membrane</location>
        <topology evidence="3">Single-pass membrane protein</topology>
    </subcellularLocation>
    <subcellularLocation>
        <location evidence="2">Golgi outpost</location>
    </subcellularLocation>
    <subcellularLocation>
        <location evidence="2">Cytoplasm</location>
        <location evidence="2">Cytoskeleton</location>
        <location evidence="2">Microtubule organizing center</location>
    </subcellularLocation>
    <text evidence="2">Localizes to the postsynaptic Golgi apparatus region, also named Golgi outpost, which shapes dendrite morphology by functioning as sites of acentrosomal microtubule nucleation.</text>
</comment>
<comment type="alternative products">
    <event type="alternative splicing"/>
    <isoform>
        <id>Q8BYI8-1</id>
        <name>1</name>
        <sequence type="displayed"/>
    </isoform>
    <isoform>
        <id>Q8BYI8-2</id>
        <name>2</name>
        <sequence type="described" ref="VSP_025825"/>
    </isoform>
</comment>
<comment type="similarity">
    <text evidence="5">Belongs to the FAM234 family.</text>
</comment>
<keyword id="KW-0025">Alternative splicing</keyword>
<keyword id="KW-0963">Cytoplasm</keyword>
<keyword id="KW-0206">Cytoskeleton</keyword>
<keyword id="KW-0333">Golgi apparatus</keyword>
<keyword id="KW-0472">Membrane</keyword>
<keyword id="KW-0597">Phosphoprotein</keyword>
<keyword id="KW-1185">Reference proteome</keyword>
<keyword id="KW-0812">Transmembrane</keyword>
<keyword id="KW-1133">Transmembrane helix</keyword>
<dbReference type="EMBL" id="AK018428">
    <property type="protein sequence ID" value="BAB31206.1"/>
    <property type="molecule type" value="mRNA"/>
</dbReference>
<dbReference type="EMBL" id="AK039348">
    <property type="protein sequence ID" value="BAC30325.1"/>
    <property type="molecule type" value="mRNA"/>
</dbReference>
<dbReference type="EMBL" id="AK039401">
    <property type="protein sequence ID" value="BAC30340.1"/>
    <property type="molecule type" value="mRNA"/>
</dbReference>
<dbReference type="EMBL" id="AK169892">
    <property type="protein sequence ID" value="BAE41441.1"/>
    <property type="molecule type" value="mRNA"/>
</dbReference>
<dbReference type="EMBL" id="AK220395">
    <property type="protein sequence ID" value="BAD90448.1"/>
    <property type="molecule type" value="mRNA"/>
</dbReference>
<dbReference type="CCDS" id="CCDS39681.1">
    <molecule id="Q8BYI8-1"/>
</dbReference>
<dbReference type="RefSeq" id="NP_083258.2">
    <molecule id="Q8BYI8-1"/>
    <property type="nucleotide sequence ID" value="NM_028982.4"/>
</dbReference>
<dbReference type="RefSeq" id="XP_030111505.1">
    <molecule id="Q8BYI8-1"/>
    <property type="nucleotide sequence ID" value="XM_030255645.2"/>
</dbReference>
<dbReference type="FunCoup" id="Q8BYI8">
    <property type="interactions" value="41"/>
</dbReference>
<dbReference type="STRING" id="10090.ENSMUSP00000107546"/>
<dbReference type="GlyConnect" id="2630">
    <property type="glycosylation" value="5 N-Linked glycans (1 site)"/>
</dbReference>
<dbReference type="GlyCosmos" id="Q8BYI8">
    <property type="glycosylation" value="1 site, 5 glycans"/>
</dbReference>
<dbReference type="GlyGen" id="Q8BYI8">
    <property type="glycosylation" value="4 sites, 8 N-linked glycans (3 sites)"/>
</dbReference>
<dbReference type="iPTMnet" id="Q8BYI8"/>
<dbReference type="PhosphoSitePlus" id="Q8BYI8"/>
<dbReference type="PaxDb" id="10090-ENSMUSP00000107546"/>
<dbReference type="ProteomicsDB" id="275830">
    <molecule id="Q8BYI8-1"/>
</dbReference>
<dbReference type="ProteomicsDB" id="275831">
    <molecule id="Q8BYI8-2"/>
</dbReference>
<dbReference type="Pumba" id="Q8BYI8"/>
<dbReference type="Antibodypedia" id="2254">
    <property type="antibodies" value="41 antibodies from 10 providers"/>
</dbReference>
<dbReference type="Ensembl" id="ENSMUST00000111915.8">
    <molecule id="Q8BYI8-1"/>
    <property type="protein sequence ID" value="ENSMUSP00000107546.2"/>
    <property type="gene ID" value="ENSMUSG00000030207.16"/>
</dbReference>
<dbReference type="Ensembl" id="ENSMUST00000111916.2">
    <molecule id="Q8BYI8-2"/>
    <property type="protein sequence ID" value="ENSMUSP00000107547.2"/>
    <property type="gene ID" value="ENSMUSG00000030207.16"/>
</dbReference>
<dbReference type="GeneID" id="74525"/>
<dbReference type="KEGG" id="mmu:74525"/>
<dbReference type="UCSC" id="uc009eli.2">
    <molecule id="Q8BYI8-1"/>
    <property type="organism name" value="mouse"/>
</dbReference>
<dbReference type="AGR" id="MGI:1921775"/>
<dbReference type="CTD" id="57613"/>
<dbReference type="MGI" id="MGI:1921775">
    <property type="gene designation" value="Fam234b"/>
</dbReference>
<dbReference type="VEuPathDB" id="HostDB:ENSMUSG00000030207"/>
<dbReference type="eggNOG" id="ENOG502QVNA">
    <property type="taxonomic scope" value="Eukaryota"/>
</dbReference>
<dbReference type="GeneTree" id="ENSGT00530000063694"/>
<dbReference type="HOGENOM" id="CLU_029706_0_0_1"/>
<dbReference type="InParanoid" id="Q8BYI8"/>
<dbReference type="OMA" id="FFQHSAN"/>
<dbReference type="OrthoDB" id="567787at2759"/>
<dbReference type="PhylomeDB" id="Q8BYI8"/>
<dbReference type="TreeFam" id="TF327203"/>
<dbReference type="BioGRID-ORCS" id="74525">
    <property type="hits" value="4 hits in 47 CRISPR screens"/>
</dbReference>
<dbReference type="ChiTaRS" id="Fam234b">
    <property type="organism name" value="mouse"/>
</dbReference>
<dbReference type="PRO" id="PR:Q8BYI8"/>
<dbReference type="Proteomes" id="UP000000589">
    <property type="component" value="Chromosome 6"/>
</dbReference>
<dbReference type="RNAct" id="Q8BYI8">
    <property type="molecule type" value="protein"/>
</dbReference>
<dbReference type="Bgee" id="ENSMUSG00000030207">
    <property type="expression patterns" value="Expressed in subiculum and 240 other cell types or tissues"/>
</dbReference>
<dbReference type="ExpressionAtlas" id="Q8BYI8">
    <property type="expression patterns" value="baseline and differential"/>
</dbReference>
<dbReference type="GO" id="GO:0005794">
    <property type="term" value="C:Golgi apparatus"/>
    <property type="evidence" value="ECO:0007669"/>
    <property type="project" value="UniProtKB-KW"/>
</dbReference>
<dbReference type="GO" id="GO:0016020">
    <property type="term" value="C:membrane"/>
    <property type="evidence" value="ECO:0007669"/>
    <property type="project" value="UniProtKB-SubCell"/>
</dbReference>
<dbReference type="GO" id="GO:0005815">
    <property type="term" value="C:microtubule organizing center"/>
    <property type="evidence" value="ECO:0007669"/>
    <property type="project" value="UniProtKB-SubCell"/>
</dbReference>
<dbReference type="Gene3D" id="2.130.10.10">
    <property type="entry name" value="YVTN repeat-like/Quinoprotein amine dehydrogenase"/>
    <property type="match status" value="1"/>
</dbReference>
<dbReference type="InterPro" id="IPR045232">
    <property type="entry name" value="FAM234"/>
</dbReference>
<dbReference type="InterPro" id="IPR055409">
    <property type="entry name" value="FAM234A_B_beta-prop"/>
</dbReference>
<dbReference type="InterPro" id="IPR011047">
    <property type="entry name" value="Quinoprotein_ADH-like_sf"/>
</dbReference>
<dbReference type="InterPro" id="IPR015943">
    <property type="entry name" value="WD40/YVTN_repeat-like_dom_sf"/>
</dbReference>
<dbReference type="PANTHER" id="PTHR21419">
    <property type="match status" value="1"/>
</dbReference>
<dbReference type="PANTHER" id="PTHR21419:SF25">
    <property type="entry name" value="PROTEIN FAM234B"/>
    <property type="match status" value="1"/>
</dbReference>
<dbReference type="Pfam" id="PF23727">
    <property type="entry name" value="Beta-prop_FAM234A_B"/>
    <property type="match status" value="1"/>
</dbReference>
<dbReference type="SUPFAM" id="SSF50998">
    <property type="entry name" value="Quinoprotein alcohol dehydrogenase-like"/>
    <property type="match status" value="1"/>
</dbReference>
<proteinExistence type="evidence at protein level"/>
<reference key="1">
    <citation type="journal article" date="2005" name="Science">
        <title>The transcriptional landscape of the mammalian genome.</title>
        <authorList>
            <person name="Carninci P."/>
            <person name="Kasukawa T."/>
            <person name="Katayama S."/>
            <person name="Gough J."/>
            <person name="Frith M.C."/>
            <person name="Maeda N."/>
            <person name="Oyama R."/>
            <person name="Ravasi T."/>
            <person name="Lenhard B."/>
            <person name="Wells C."/>
            <person name="Kodzius R."/>
            <person name="Shimokawa K."/>
            <person name="Bajic V.B."/>
            <person name="Brenner S.E."/>
            <person name="Batalov S."/>
            <person name="Forrest A.R."/>
            <person name="Zavolan M."/>
            <person name="Davis M.J."/>
            <person name="Wilming L.G."/>
            <person name="Aidinis V."/>
            <person name="Allen J.E."/>
            <person name="Ambesi-Impiombato A."/>
            <person name="Apweiler R."/>
            <person name="Aturaliya R.N."/>
            <person name="Bailey T.L."/>
            <person name="Bansal M."/>
            <person name="Baxter L."/>
            <person name="Beisel K.W."/>
            <person name="Bersano T."/>
            <person name="Bono H."/>
            <person name="Chalk A.M."/>
            <person name="Chiu K.P."/>
            <person name="Choudhary V."/>
            <person name="Christoffels A."/>
            <person name="Clutterbuck D.R."/>
            <person name="Crowe M.L."/>
            <person name="Dalla E."/>
            <person name="Dalrymple B.P."/>
            <person name="de Bono B."/>
            <person name="Della Gatta G."/>
            <person name="di Bernardo D."/>
            <person name="Down T."/>
            <person name="Engstrom P."/>
            <person name="Fagiolini M."/>
            <person name="Faulkner G."/>
            <person name="Fletcher C.F."/>
            <person name="Fukushima T."/>
            <person name="Furuno M."/>
            <person name="Futaki S."/>
            <person name="Gariboldi M."/>
            <person name="Georgii-Hemming P."/>
            <person name="Gingeras T.R."/>
            <person name="Gojobori T."/>
            <person name="Green R.E."/>
            <person name="Gustincich S."/>
            <person name="Harbers M."/>
            <person name="Hayashi Y."/>
            <person name="Hensch T.K."/>
            <person name="Hirokawa N."/>
            <person name="Hill D."/>
            <person name="Huminiecki L."/>
            <person name="Iacono M."/>
            <person name="Ikeo K."/>
            <person name="Iwama A."/>
            <person name="Ishikawa T."/>
            <person name="Jakt M."/>
            <person name="Kanapin A."/>
            <person name="Katoh M."/>
            <person name="Kawasawa Y."/>
            <person name="Kelso J."/>
            <person name="Kitamura H."/>
            <person name="Kitano H."/>
            <person name="Kollias G."/>
            <person name="Krishnan S.P."/>
            <person name="Kruger A."/>
            <person name="Kummerfeld S.K."/>
            <person name="Kurochkin I.V."/>
            <person name="Lareau L.F."/>
            <person name="Lazarevic D."/>
            <person name="Lipovich L."/>
            <person name="Liu J."/>
            <person name="Liuni S."/>
            <person name="McWilliam S."/>
            <person name="Madan Babu M."/>
            <person name="Madera M."/>
            <person name="Marchionni L."/>
            <person name="Matsuda H."/>
            <person name="Matsuzawa S."/>
            <person name="Miki H."/>
            <person name="Mignone F."/>
            <person name="Miyake S."/>
            <person name="Morris K."/>
            <person name="Mottagui-Tabar S."/>
            <person name="Mulder N."/>
            <person name="Nakano N."/>
            <person name="Nakauchi H."/>
            <person name="Ng P."/>
            <person name="Nilsson R."/>
            <person name="Nishiguchi S."/>
            <person name="Nishikawa S."/>
            <person name="Nori F."/>
            <person name="Ohara O."/>
            <person name="Okazaki Y."/>
            <person name="Orlando V."/>
            <person name="Pang K.C."/>
            <person name="Pavan W.J."/>
            <person name="Pavesi G."/>
            <person name="Pesole G."/>
            <person name="Petrovsky N."/>
            <person name="Piazza S."/>
            <person name="Reed J."/>
            <person name="Reid J.F."/>
            <person name="Ring B.Z."/>
            <person name="Ringwald M."/>
            <person name="Rost B."/>
            <person name="Ruan Y."/>
            <person name="Salzberg S.L."/>
            <person name="Sandelin A."/>
            <person name="Schneider C."/>
            <person name="Schoenbach C."/>
            <person name="Sekiguchi K."/>
            <person name="Semple C.A."/>
            <person name="Seno S."/>
            <person name="Sessa L."/>
            <person name="Sheng Y."/>
            <person name="Shibata Y."/>
            <person name="Shimada H."/>
            <person name="Shimada K."/>
            <person name="Silva D."/>
            <person name="Sinclair B."/>
            <person name="Sperling S."/>
            <person name="Stupka E."/>
            <person name="Sugiura K."/>
            <person name="Sultana R."/>
            <person name="Takenaka Y."/>
            <person name="Taki K."/>
            <person name="Tammoja K."/>
            <person name="Tan S.L."/>
            <person name="Tang S."/>
            <person name="Taylor M.S."/>
            <person name="Tegner J."/>
            <person name="Teichmann S.A."/>
            <person name="Ueda H.R."/>
            <person name="van Nimwegen E."/>
            <person name="Verardo R."/>
            <person name="Wei C.L."/>
            <person name="Yagi K."/>
            <person name="Yamanishi H."/>
            <person name="Zabarovsky E."/>
            <person name="Zhu S."/>
            <person name="Zimmer A."/>
            <person name="Hide W."/>
            <person name="Bult C."/>
            <person name="Grimmond S.M."/>
            <person name="Teasdale R.D."/>
            <person name="Liu E.T."/>
            <person name="Brusic V."/>
            <person name="Quackenbush J."/>
            <person name="Wahlestedt C."/>
            <person name="Mattick J.S."/>
            <person name="Hume D.A."/>
            <person name="Kai C."/>
            <person name="Sasaki D."/>
            <person name="Tomaru Y."/>
            <person name="Fukuda S."/>
            <person name="Kanamori-Katayama M."/>
            <person name="Suzuki M."/>
            <person name="Aoki J."/>
            <person name="Arakawa T."/>
            <person name="Iida J."/>
            <person name="Imamura K."/>
            <person name="Itoh M."/>
            <person name="Kato T."/>
            <person name="Kawaji H."/>
            <person name="Kawagashira N."/>
            <person name="Kawashima T."/>
            <person name="Kojima M."/>
            <person name="Kondo S."/>
            <person name="Konno H."/>
            <person name="Nakano K."/>
            <person name="Ninomiya N."/>
            <person name="Nishio T."/>
            <person name="Okada M."/>
            <person name="Plessy C."/>
            <person name="Shibata K."/>
            <person name="Shiraki T."/>
            <person name="Suzuki S."/>
            <person name="Tagami M."/>
            <person name="Waki K."/>
            <person name="Watahiki A."/>
            <person name="Okamura-Oho Y."/>
            <person name="Suzuki H."/>
            <person name="Kawai J."/>
            <person name="Hayashizaki Y."/>
        </authorList>
    </citation>
    <scope>NUCLEOTIDE SEQUENCE [LARGE SCALE MRNA]</scope>
    <source>
        <strain>C57BL/6J</strain>
        <strain>NOD</strain>
        <tissue>Lung</tissue>
        <tissue>Spinal cord</tissue>
    </source>
</reference>
<reference key="2">
    <citation type="submission" date="2005-02" db="EMBL/GenBank/DDBJ databases">
        <title>Prediction of the coding sequences of mouse homologues of KIAA gene. The complete nucleotide sequences of mouse KIAA-homologous cDNAs identified by screening of terminal sequences of cDNA clones randomly sampled from size-fractionated libraries.</title>
        <authorList>
            <person name="Okazaki N."/>
            <person name="Kikuno R.F."/>
            <person name="Ohara R."/>
            <person name="Inamoto S."/>
            <person name="Nagase T."/>
            <person name="Ohara O."/>
            <person name="Koga H."/>
        </authorList>
    </citation>
    <scope>NUCLEOTIDE SEQUENCE [LARGE SCALE MRNA] OF 92-624</scope>
    <source>
        <tissue>Brain</tissue>
    </source>
</reference>
<reference key="3">
    <citation type="journal article" date="2010" name="Cell">
        <title>A tissue-specific atlas of mouse protein phosphorylation and expression.</title>
        <authorList>
            <person name="Huttlin E.L."/>
            <person name="Jedrychowski M.P."/>
            <person name="Elias J.E."/>
            <person name="Goswami T."/>
            <person name="Rad R."/>
            <person name="Beausoleil S.A."/>
            <person name="Villen J."/>
            <person name="Haas W."/>
            <person name="Sowa M.E."/>
            <person name="Gygi S.P."/>
        </authorList>
    </citation>
    <scope>PHOSPHORYLATION [LARGE SCALE ANALYSIS] AT SER-30; SER-33 AND SER-63</scope>
    <scope>IDENTIFICATION BY MASS SPECTROMETRY [LARGE SCALE ANALYSIS]</scope>
    <source>
        <tissue>Brain</tissue>
        <tissue>Kidney</tissue>
        <tissue>Liver</tissue>
        <tissue>Pancreas</tissue>
        <tissue>Testis</tissue>
    </source>
</reference>